<organism>
    <name type="scientific">Huperzia lucidula</name>
    <name type="common">Shining clubmoss</name>
    <name type="synonym">Lycopodium lucidulum</name>
    <dbReference type="NCBI Taxonomy" id="37429"/>
    <lineage>
        <taxon>Eukaryota</taxon>
        <taxon>Viridiplantae</taxon>
        <taxon>Streptophyta</taxon>
        <taxon>Embryophyta</taxon>
        <taxon>Tracheophyta</taxon>
        <taxon>Lycopodiopsida</taxon>
        <taxon>Lycopodiales</taxon>
        <taxon>Lycopodiaceae</taxon>
        <taxon>Huperzioideae</taxon>
        <taxon>Huperzia</taxon>
    </lineage>
</organism>
<evidence type="ECO:0000255" key="1">
    <source>
        <dbReference type="HAMAP-Rule" id="MF_01367"/>
    </source>
</evidence>
<evidence type="ECO:0000305" key="2"/>
<name>RK14_HUPLU</name>
<proteinExistence type="inferred from homology"/>
<gene>
    <name evidence="1" type="primary">rpl14</name>
</gene>
<reference key="1">
    <citation type="journal article" date="2005" name="Gene">
        <title>The first complete chloroplast genome sequence of a lycophyte, Huperzia lucidula (Lycopodiaceae).</title>
        <authorList>
            <person name="Wolf P.G."/>
            <person name="Karol K.G."/>
            <person name="Mandoli D.F."/>
            <person name="Kuehl J.V."/>
            <person name="Arumuganathan K."/>
            <person name="Ellis M.W."/>
            <person name="Mishler B.D."/>
            <person name="Kelch D.G."/>
            <person name="Olmstead R.G."/>
            <person name="Boore J.L."/>
        </authorList>
    </citation>
    <scope>NUCLEOTIDE SEQUENCE [LARGE SCALE GENOMIC DNA]</scope>
</reference>
<sequence>MIQPQTYLNVADNSGAKKPMCIRILKASNRKYANTGNVIVAVVKEAVPNMPLRKSEIVRAVVVRTCKELKRNNGMIIQFDDNAAVIINQEGNPRGTRVFGPVARESREFNFTKIVSLAPEVL</sequence>
<comment type="function">
    <text evidence="1">Binds to 23S rRNA.</text>
</comment>
<comment type="subunit">
    <text evidence="1">Part of the 50S ribosomal subunit.</text>
</comment>
<comment type="subcellular location">
    <subcellularLocation>
        <location>Plastid</location>
        <location>Chloroplast</location>
    </subcellularLocation>
</comment>
<comment type="similarity">
    <text evidence="1">Belongs to the universal ribosomal protein uL14 family.</text>
</comment>
<feature type="chain" id="PRO_0000266595" description="Large ribosomal subunit protein uL14c">
    <location>
        <begin position="1"/>
        <end position="122"/>
    </location>
</feature>
<protein>
    <recommendedName>
        <fullName evidence="1">Large ribosomal subunit protein uL14c</fullName>
    </recommendedName>
    <alternativeName>
        <fullName evidence="2">50S ribosomal protein L14, chloroplastic</fullName>
    </alternativeName>
</protein>
<dbReference type="EMBL" id="AY660566">
    <property type="protein sequence ID" value="AAT80688.1"/>
    <property type="molecule type" value="Genomic_DNA"/>
</dbReference>
<dbReference type="RefSeq" id="YP_209492.1">
    <property type="nucleotide sequence ID" value="NC_006861.1"/>
</dbReference>
<dbReference type="SMR" id="Q5SD17"/>
<dbReference type="GeneID" id="3283820"/>
<dbReference type="GO" id="GO:0009507">
    <property type="term" value="C:chloroplast"/>
    <property type="evidence" value="ECO:0007669"/>
    <property type="project" value="UniProtKB-SubCell"/>
</dbReference>
<dbReference type="GO" id="GO:0022625">
    <property type="term" value="C:cytosolic large ribosomal subunit"/>
    <property type="evidence" value="ECO:0007669"/>
    <property type="project" value="TreeGrafter"/>
</dbReference>
<dbReference type="GO" id="GO:0070180">
    <property type="term" value="F:large ribosomal subunit rRNA binding"/>
    <property type="evidence" value="ECO:0007669"/>
    <property type="project" value="TreeGrafter"/>
</dbReference>
<dbReference type="GO" id="GO:0003735">
    <property type="term" value="F:structural constituent of ribosome"/>
    <property type="evidence" value="ECO:0007669"/>
    <property type="project" value="InterPro"/>
</dbReference>
<dbReference type="GO" id="GO:0006412">
    <property type="term" value="P:translation"/>
    <property type="evidence" value="ECO:0007669"/>
    <property type="project" value="UniProtKB-UniRule"/>
</dbReference>
<dbReference type="CDD" id="cd00337">
    <property type="entry name" value="Ribosomal_uL14"/>
    <property type="match status" value="1"/>
</dbReference>
<dbReference type="FunFam" id="2.40.150.20:FF:000002">
    <property type="entry name" value="50S ribosomal protein L14, chloroplastic"/>
    <property type="match status" value="1"/>
</dbReference>
<dbReference type="Gene3D" id="2.40.150.20">
    <property type="entry name" value="Ribosomal protein L14"/>
    <property type="match status" value="1"/>
</dbReference>
<dbReference type="HAMAP" id="MF_01367">
    <property type="entry name" value="Ribosomal_uL14"/>
    <property type="match status" value="1"/>
</dbReference>
<dbReference type="InterPro" id="IPR000218">
    <property type="entry name" value="Ribosomal_uL14"/>
</dbReference>
<dbReference type="InterPro" id="IPR005745">
    <property type="entry name" value="Ribosomal_uL14_bac-type"/>
</dbReference>
<dbReference type="InterPro" id="IPR019972">
    <property type="entry name" value="Ribosomal_uL14_CS"/>
</dbReference>
<dbReference type="InterPro" id="IPR036853">
    <property type="entry name" value="Ribosomal_uL14_sf"/>
</dbReference>
<dbReference type="NCBIfam" id="TIGR01067">
    <property type="entry name" value="rplN_bact"/>
    <property type="match status" value="1"/>
</dbReference>
<dbReference type="PANTHER" id="PTHR11761">
    <property type="entry name" value="50S/60S RIBOSOMAL PROTEIN L14/L23"/>
    <property type="match status" value="1"/>
</dbReference>
<dbReference type="PANTHER" id="PTHR11761:SF3">
    <property type="entry name" value="LARGE RIBOSOMAL SUBUNIT PROTEIN UL14M"/>
    <property type="match status" value="1"/>
</dbReference>
<dbReference type="Pfam" id="PF00238">
    <property type="entry name" value="Ribosomal_L14"/>
    <property type="match status" value="1"/>
</dbReference>
<dbReference type="SMART" id="SM01374">
    <property type="entry name" value="Ribosomal_L14"/>
    <property type="match status" value="1"/>
</dbReference>
<dbReference type="SUPFAM" id="SSF50193">
    <property type="entry name" value="Ribosomal protein L14"/>
    <property type="match status" value="1"/>
</dbReference>
<dbReference type="PROSITE" id="PS00049">
    <property type="entry name" value="RIBOSOMAL_L14"/>
    <property type="match status" value="1"/>
</dbReference>
<keyword id="KW-0150">Chloroplast</keyword>
<keyword id="KW-0934">Plastid</keyword>
<keyword id="KW-0687">Ribonucleoprotein</keyword>
<keyword id="KW-0689">Ribosomal protein</keyword>
<keyword id="KW-0694">RNA-binding</keyword>
<keyword id="KW-0699">rRNA-binding</keyword>
<geneLocation type="chloroplast"/>
<accession>Q5SD17</accession>